<feature type="chain" id="PRO_0000411132" description="Diaminopimelate decarboxylase">
    <location>
        <begin position="1"/>
        <end position="402"/>
    </location>
</feature>
<feature type="binding site" evidence="1">
    <location>
        <position position="233"/>
    </location>
    <ligand>
        <name>pyridoxal 5'-phosphate</name>
        <dbReference type="ChEBI" id="CHEBI:597326"/>
    </ligand>
</feature>
<feature type="binding site" evidence="1">
    <location>
        <begin position="269"/>
        <end position="272"/>
    </location>
    <ligand>
        <name>pyridoxal 5'-phosphate</name>
        <dbReference type="ChEBI" id="CHEBI:597326"/>
    </ligand>
</feature>
<feature type="binding site" evidence="1">
    <location>
        <position position="272"/>
    </location>
    <ligand>
        <name>substrate</name>
    </ligand>
</feature>
<feature type="binding site" evidence="1">
    <location>
        <position position="304"/>
    </location>
    <ligand>
        <name>substrate</name>
    </ligand>
</feature>
<feature type="binding site" evidence="1">
    <location>
        <position position="308"/>
    </location>
    <ligand>
        <name>substrate</name>
    </ligand>
</feature>
<feature type="binding site" evidence="1">
    <location>
        <position position="334"/>
    </location>
    <ligand>
        <name>substrate</name>
    </ligand>
</feature>
<feature type="binding site" evidence="1">
    <location>
        <position position="360"/>
    </location>
    <ligand>
        <name>pyridoxal 5'-phosphate</name>
        <dbReference type="ChEBI" id="CHEBI:597326"/>
    </ligand>
</feature>
<feature type="binding site" evidence="1">
    <location>
        <position position="360"/>
    </location>
    <ligand>
        <name>substrate</name>
    </ligand>
</feature>
<feature type="modified residue" description="N6-(pyridoxal phosphate)lysine" evidence="1">
    <location>
        <position position="61"/>
    </location>
</feature>
<protein>
    <recommendedName>
        <fullName evidence="1">Diaminopimelate decarboxylase</fullName>
        <shortName evidence="1">DAP decarboxylase</shortName>
        <shortName evidence="1">DAPDC</shortName>
        <ecNumber evidence="1">4.1.1.20</ecNumber>
    </recommendedName>
</protein>
<evidence type="ECO:0000255" key="1">
    <source>
        <dbReference type="HAMAP-Rule" id="MF_02120"/>
    </source>
</evidence>
<evidence type="ECO:0000305" key="2"/>
<keyword id="KW-0028">Amino-acid biosynthesis</keyword>
<keyword id="KW-0210">Decarboxylase</keyword>
<keyword id="KW-0456">Lyase</keyword>
<keyword id="KW-0457">Lysine biosynthesis</keyword>
<keyword id="KW-0663">Pyridoxal phosphate</keyword>
<keyword id="KW-1185">Reference proteome</keyword>
<proteinExistence type="inferred from homology"/>
<reference key="1">
    <citation type="journal article" date="2000" name="Nature">
        <title>The genome sequence of the thermoacidophilic scavenger Thermoplasma acidophilum.</title>
        <authorList>
            <person name="Ruepp A."/>
            <person name="Graml W."/>
            <person name="Santos-Martinez M.-L."/>
            <person name="Koretke K.K."/>
            <person name="Volker C."/>
            <person name="Mewes H.-W."/>
            <person name="Frishman D."/>
            <person name="Stocker S."/>
            <person name="Lupas A.N."/>
            <person name="Baumeister W."/>
        </authorList>
    </citation>
    <scope>NUCLEOTIDE SEQUENCE [LARGE SCALE GENOMIC DNA]</scope>
    <source>
        <strain>ATCC 25905 / DSM 1728 / JCM 9062 / NBRC 15155 / AMRC-C165</strain>
    </source>
</reference>
<dbReference type="EC" id="4.1.1.20" evidence="1"/>
<dbReference type="EMBL" id="AL445065">
    <property type="protein sequence ID" value="CAC11919.1"/>
    <property type="status" value="ALT_INIT"/>
    <property type="molecule type" value="Genomic_DNA"/>
</dbReference>
<dbReference type="RefSeq" id="WP_010901201.1">
    <property type="nucleotide sequence ID" value="NC_002578.1"/>
</dbReference>
<dbReference type="SMR" id="Q9HK20"/>
<dbReference type="STRING" id="273075.gene:9572003"/>
<dbReference type="PaxDb" id="273075-Ta0788m"/>
<dbReference type="EnsemblBacteria" id="CAC11919">
    <property type="protein sequence ID" value="CAC11919"/>
    <property type="gene ID" value="CAC11919"/>
</dbReference>
<dbReference type="KEGG" id="tac:Ta0788"/>
<dbReference type="eggNOG" id="arCOG02268">
    <property type="taxonomic scope" value="Archaea"/>
</dbReference>
<dbReference type="HOGENOM" id="CLU_026444_0_2_2"/>
<dbReference type="InParanoid" id="Q9HK20"/>
<dbReference type="OrthoDB" id="18565at2157"/>
<dbReference type="UniPathway" id="UPA00034">
    <property type="reaction ID" value="UER00027"/>
</dbReference>
<dbReference type="Proteomes" id="UP000001024">
    <property type="component" value="Chromosome"/>
</dbReference>
<dbReference type="GO" id="GO:0008836">
    <property type="term" value="F:diaminopimelate decarboxylase activity"/>
    <property type="evidence" value="ECO:0007669"/>
    <property type="project" value="UniProtKB-UniRule"/>
</dbReference>
<dbReference type="GO" id="GO:0030170">
    <property type="term" value="F:pyridoxal phosphate binding"/>
    <property type="evidence" value="ECO:0007669"/>
    <property type="project" value="UniProtKB-UniRule"/>
</dbReference>
<dbReference type="GO" id="GO:0009089">
    <property type="term" value="P:lysine biosynthetic process via diaminopimelate"/>
    <property type="evidence" value="ECO:0007669"/>
    <property type="project" value="UniProtKB-UniRule"/>
</dbReference>
<dbReference type="CDD" id="cd06828">
    <property type="entry name" value="PLPDE_III_DapDC"/>
    <property type="match status" value="1"/>
</dbReference>
<dbReference type="Gene3D" id="3.20.20.10">
    <property type="entry name" value="Alanine racemase"/>
    <property type="match status" value="1"/>
</dbReference>
<dbReference type="Gene3D" id="2.40.37.10">
    <property type="entry name" value="Lyase, Ornithine Decarboxylase, Chain A, domain 1"/>
    <property type="match status" value="1"/>
</dbReference>
<dbReference type="HAMAP" id="MF_02120">
    <property type="entry name" value="LysA"/>
    <property type="match status" value="1"/>
</dbReference>
<dbReference type="InterPro" id="IPR009006">
    <property type="entry name" value="Ala_racemase/Decarboxylase_C"/>
</dbReference>
<dbReference type="InterPro" id="IPR002986">
    <property type="entry name" value="DAP_deCOOHase_LysA"/>
</dbReference>
<dbReference type="InterPro" id="IPR022643">
    <property type="entry name" value="De-COase2_C"/>
</dbReference>
<dbReference type="InterPro" id="IPR022644">
    <property type="entry name" value="De-COase2_N"/>
</dbReference>
<dbReference type="InterPro" id="IPR000183">
    <property type="entry name" value="Orn/DAP/Arg_de-COase"/>
</dbReference>
<dbReference type="InterPro" id="IPR029066">
    <property type="entry name" value="PLP-binding_barrel"/>
</dbReference>
<dbReference type="PANTHER" id="PTHR43727">
    <property type="entry name" value="DIAMINOPIMELATE DECARBOXYLASE"/>
    <property type="match status" value="1"/>
</dbReference>
<dbReference type="PANTHER" id="PTHR43727:SF2">
    <property type="entry name" value="GROUP IV DECARBOXYLASE"/>
    <property type="match status" value="1"/>
</dbReference>
<dbReference type="Pfam" id="PF02784">
    <property type="entry name" value="Orn_Arg_deC_N"/>
    <property type="match status" value="1"/>
</dbReference>
<dbReference type="Pfam" id="PF00278">
    <property type="entry name" value="Orn_DAP_Arg_deC"/>
    <property type="match status" value="1"/>
</dbReference>
<dbReference type="PRINTS" id="PR01181">
    <property type="entry name" value="DAPDCRBXLASE"/>
</dbReference>
<dbReference type="PRINTS" id="PR01179">
    <property type="entry name" value="ODADCRBXLASE"/>
</dbReference>
<dbReference type="SUPFAM" id="SSF50621">
    <property type="entry name" value="Alanine racemase C-terminal domain-like"/>
    <property type="match status" value="1"/>
</dbReference>
<dbReference type="SUPFAM" id="SSF51419">
    <property type="entry name" value="PLP-binding barrel"/>
    <property type="match status" value="1"/>
</dbReference>
<sequence length="402" mass="44844">MGIYDIFDDESARSISGMSIDEMAKKYGTPVIIYSRARIVSNIRRIREAYENRVRMLYSVKANDNPRIIEIMHQESIGSDSASPMEIMMSIFSGIPPEDILYSPNNASEYDLNFALDRGIAINFNTFTQYRKMREKPERISFRINPGFGMGEFAGTTTGGARTKFGIDPDAAILAYRKAREDGIREFGIHMMIGSNNRDHVKIAEAYSNFFRIADRIGREAGVSFQFADVGGGLGIPYVQGENELDIAALGSAVLKEFDRYHFGDLVLEPGRYLVGDAGIIVGTVNDVHNGFAGTDIGMNLNIRPALYGARHTIIPVGERVEGEKITVTGQICENTDRIGDTAWRLSEGDRIMVLDAGAYVYSMSSRYNGRPRPPEIMIMEDGKDVMIRRREDFSDFIATVV</sequence>
<accession>Q9HK20</accession>
<organism>
    <name type="scientific">Thermoplasma acidophilum (strain ATCC 25905 / DSM 1728 / JCM 9062 / NBRC 15155 / AMRC-C165)</name>
    <dbReference type="NCBI Taxonomy" id="273075"/>
    <lineage>
        <taxon>Archaea</taxon>
        <taxon>Methanobacteriati</taxon>
        <taxon>Thermoplasmatota</taxon>
        <taxon>Thermoplasmata</taxon>
        <taxon>Thermoplasmatales</taxon>
        <taxon>Thermoplasmataceae</taxon>
        <taxon>Thermoplasma</taxon>
    </lineage>
</organism>
<gene>
    <name evidence="1" type="primary">lysA</name>
    <name type="ordered locus">Ta0788</name>
</gene>
<comment type="function">
    <text evidence="1">Specifically catalyzes the decarboxylation of meso-diaminopimelate (meso-DAP) to L-lysine.</text>
</comment>
<comment type="catalytic activity">
    <reaction evidence="1">
        <text>meso-2,6-diaminopimelate + H(+) = L-lysine + CO2</text>
        <dbReference type="Rhea" id="RHEA:15101"/>
        <dbReference type="ChEBI" id="CHEBI:15378"/>
        <dbReference type="ChEBI" id="CHEBI:16526"/>
        <dbReference type="ChEBI" id="CHEBI:32551"/>
        <dbReference type="ChEBI" id="CHEBI:57791"/>
        <dbReference type="EC" id="4.1.1.20"/>
    </reaction>
</comment>
<comment type="cofactor">
    <cofactor evidence="1">
        <name>pyridoxal 5'-phosphate</name>
        <dbReference type="ChEBI" id="CHEBI:597326"/>
    </cofactor>
</comment>
<comment type="pathway">
    <text evidence="1">Amino-acid biosynthesis; L-lysine biosynthesis via DAP pathway; L-lysine from DL-2,6-diaminopimelate: step 1/1.</text>
</comment>
<comment type="subunit">
    <text evidence="1">Homodimer.</text>
</comment>
<comment type="similarity">
    <text evidence="1">Belongs to the Orn/Lys/Arg decarboxylase class-II family. LysA subfamily.</text>
</comment>
<comment type="sequence caution" evidence="2">
    <conflict type="erroneous initiation">
        <sequence resource="EMBL-CDS" id="CAC11919"/>
    </conflict>
    <text>Extended N-terminus.</text>
</comment>
<name>DCDA_THEAC</name>